<dbReference type="EMBL" id="CP001298">
    <property type="protein sequence ID" value="ACK83286.1"/>
    <property type="molecule type" value="Genomic_DNA"/>
</dbReference>
<dbReference type="RefSeq" id="WP_003597098.1">
    <property type="nucleotide sequence ID" value="NC_011757.1"/>
</dbReference>
<dbReference type="SMR" id="B7L0R5"/>
<dbReference type="GeneID" id="72989854"/>
<dbReference type="KEGG" id="mch:Mchl_2444"/>
<dbReference type="HOGENOM" id="CLU_144911_0_1_5"/>
<dbReference type="Proteomes" id="UP000002385">
    <property type="component" value="Chromosome"/>
</dbReference>
<dbReference type="GO" id="GO:0005737">
    <property type="term" value="C:cytoplasm"/>
    <property type="evidence" value="ECO:0007669"/>
    <property type="project" value="UniProtKB-ARBA"/>
</dbReference>
<dbReference type="GO" id="GO:0015935">
    <property type="term" value="C:small ribosomal subunit"/>
    <property type="evidence" value="ECO:0007669"/>
    <property type="project" value="InterPro"/>
</dbReference>
<dbReference type="GO" id="GO:0019843">
    <property type="term" value="F:rRNA binding"/>
    <property type="evidence" value="ECO:0007669"/>
    <property type="project" value="UniProtKB-UniRule"/>
</dbReference>
<dbReference type="GO" id="GO:0003735">
    <property type="term" value="F:structural constituent of ribosome"/>
    <property type="evidence" value="ECO:0007669"/>
    <property type="project" value="InterPro"/>
</dbReference>
<dbReference type="GO" id="GO:0000028">
    <property type="term" value="P:ribosomal small subunit assembly"/>
    <property type="evidence" value="ECO:0007669"/>
    <property type="project" value="TreeGrafter"/>
</dbReference>
<dbReference type="GO" id="GO:0006412">
    <property type="term" value="P:translation"/>
    <property type="evidence" value="ECO:0007669"/>
    <property type="project" value="UniProtKB-UniRule"/>
</dbReference>
<dbReference type="FunFam" id="3.30.860.10:FF:000001">
    <property type="entry name" value="30S ribosomal protein S19"/>
    <property type="match status" value="1"/>
</dbReference>
<dbReference type="Gene3D" id="3.30.860.10">
    <property type="entry name" value="30s Ribosomal Protein S19, Chain A"/>
    <property type="match status" value="1"/>
</dbReference>
<dbReference type="HAMAP" id="MF_00531">
    <property type="entry name" value="Ribosomal_uS19"/>
    <property type="match status" value="1"/>
</dbReference>
<dbReference type="InterPro" id="IPR002222">
    <property type="entry name" value="Ribosomal_uS19"/>
</dbReference>
<dbReference type="InterPro" id="IPR005732">
    <property type="entry name" value="Ribosomal_uS19_bac-type"/>
</dbReference>
<dbReference type="InterPro" id="IPR020934">
    <property type="entry name" value="Ribosomal_uS19_CS"/>
</dbReference>
<dbReference type="InterPro" id="IPR023575">
    <property type="entry name" value="Ribosomal_uS19_SF"/>
</dbReference>
<dbReference type="NCBIfam" id="TIGR01050">
    <property type="entry name" value="rpsS_bact"/>
    <property type="match status" value="1"/>
</dbReference>
<dbReference type="PANTHER" id="PTHR11880">
    <property type="entry name" value="RIBOSOMAL PROTEIN S19P FAMILY MEMBER"/>
    <property type="match status" value="1"/>
</dbReference>
<dbReference type="PANTHER" id="PTHR11880:SF8">
    <property type="entry name" value="SMALL RIBOSOMAL SUBUNIT PROTEIN US19M"/>
    <property type="match status" value="1"/>
</dbReference>
<dbReference type="Pfam" id="PF00203">
    <property type="entry name" value="Ribosomal_S19"/>
    <property type="match status" value="1"/>
</dbReference>
<dbReference type="PIRSF" id="PIRSF002144">
    <property type="entry name" value="Ribosomal_S19"/>
    <property type="match status" value="1"/>
</dbReference>
<dbReference type="PRINTS" id="PR00975">
    <property type="entry name" value="RIBOSOMALS19"/>
</dbReference>
<dbReference type="SUPFAM" id="SSF54570">
    <property type="entry name" value="Ribosomal protein S19"/>
    <property type="match status" value="1"/>
</dbReference>
<dbReference type="PROSITE" id="PS00323">
    <property type="entry name" value="RIBOSOMAL_S19"/>
    <property type="match status" value="1"/>
</dbReference>
<evidence type="ECO:0000255" key="1">
    <source>
        <dbReference type="HAMAP-Rule" id="MF_00531"/>
    </source>
</evidence>
<evidence type="ECO:0000305" key="2"/>
<sequence>MARSLWKGPFVDGYLLKKADAARGGSRNEVVKIWSRRSTILPQFVGITFGVHNGHKHIPVYVTEEMVGHKFGEFSPTRTFPGHAADKKAKRR</sequence>
<feature type="chain" id="PRO_1000146399" description="Small ribosomal subunit protein uS19">
    <location>
        <begin position="1"/>
        <end position="92"/>
    </location>
</feature>
<keyword id="KW-0687">Ribonucleoprotein</keyword>
<keyword id="KW-0689">Ribosomal protein</keyword>
<keyword id="KW-0694">RNA-binding</keyword>
<keyword id="KW-0699">rRNA-binding</keyword>
<proteinExistence type="inferred from homology"/>
<name>RS19_METC4</name>
<organism>
    <name type="scientific">Methylorubrum extorquens (strain CM4 / NCIMB 13688)</name>
    <name type="common">Methylobacterium extorquens</name>
    <dbReference type="NCBI Taxonomy" id="440085"/>
    <lineage>
        <taxon>Bacteria</taxon>
        <taxon>Pseudomonadati</taxon>
        <taxon>Pseudomonadota</taxon>
        <taxon>Alphaproteobacteria</taxon>
        <taxon>Hyphomicrobiales</taxon>
        <taxon>Methylobacteriaceae</taxon>
        <taxon>Methylorubrum</taxon>
    </lineage>
</organism>
<comment type="function">
    <text evidence="1">Protein S19 forms a complex with S13 that binds strongly to the 16S ribosomal RNA.</text>
</comment>
<comment type="similarity">
    <text evidence="1">Belongs to the universal ribosomal protein uS19 family.</text>
</comment>
<reference key="1">
    <citation type="submission" date="2008-12" db="EMBL/GenBank/DDBJ databases">
        <title>Complete sequence of chromosome of Methylobacterium chloromethanicum CM4.</title>
        <authorList>
            <consortium name="US DOE Joint Genome Institute"/>
            <person name="Lucas S."/>
            <person name="Copeland A."/>
            <person name="Lapidus A."/>
            <person name="Glavina del Rio T."/>
            <person name="Dalin E."/>
            <person name="Tice H."/>
            <person name="Bruce D."/>
            <person name="Goodwin L."/>
            <person name="Pitluck S."/>
            <person name="Chertkov O."/>
            <person name="Brettin T."/>
            <person name="Detter J.C."/>
            <person name="Han C."/>
            <person name="Larimer F."/>
            <person name="Land M."/>
            <person name="Hauser L."/>
            <person name="Kyrpides N."/>
            <person name="Mikhailova N."/>
            <person name="Marx C."/>
            <person name="Richardson P."/>
        </authorList>
    </citation>
    <scope>NUCLEOTIDE SEQUENCE [LARGE SCALE GENOMIC DNA]</scope>
    <source>
        <strain>CM4 / NCIMB 13688</strain>
    </source>
</reference>
<protein>
    <recommendedName>
        <fullName evidence="1">Small ribosomal subunit protein uS19</fullName>
    </recommendedName>
    <alternativeName>
        <fullName evidence="2">30S ribosomal protein S19</fullName>
    </alternativeName>
</protein>
<gene>
    <name evidence="1" type="primary">rpsS</name>
    <name type="ordered locus">Mchl_2444</name>
</gene>
<accession>B7L0R5</accession>